<organism>
    <name type="scientific">Streptomyces coelicolor (strain ATCC BAA-471 / A3(2) / M145)</name>
    <dbReference type="NCBI Taxonomy" id="100226"/>
    <lineage>
        <taxon>Bacteria</taxon>
        <taxon>Bacillati</taxon>
        <taxon>Actinomycetota</taxon>
        <taxon>Actinomycetes</taxon>
        <taxon>Kitasatosporales</taxon>
        <taxon>Streptomycetaceae</taxon>
        <taxon>Streptomyces</taxon>
        <taxon>Streptomyces albidoflavus group</taxon>
    </lineage>
</organism>
<comment type="function">
    <text evidence="1">Catalyzes the reversible isomerization of glucose-6-phosphate to fructose-6-phosphate.</text>
</comment>
<comment type="catalytic activity">
    <reaction evidence="1">
        <text>alpha-D-glucose 6-phosphate = beta-D-fructose 6-phosphate</text>
        <dbReference type="Rhea" id="RHEA:11816"/>
        <dbReference type="ChEBI" id="CHEBI:57634"/>
        <dbReference type="ChEBI" id="CHEBI:58225"/>
        <dbReference type="EC" id="5.3.1.9"/>
    </reaction>
</comment>
<comment type="pathway">
    <text evidence="1">Carbohydrate biosynthesis; gluconeogenesis.</text>
</comment>
<comment type="pathway">
    <text evidence="1">Carbohydrate degradation; glycolysis; D-glyceraldehyde 3-phosphate and glycerone phosphate from D-glucose: step 2/4.</text>
</comment>
<comment type="subcellular location">
    <subcellularLocation>
        <location evidence="1">Cytoplasm</location>
    </subcellularLocation>
</comment>
<comment type="similarity">
    <text evidence="1 2">Belongs to the GPI family.</text>
</comment>
<proteinExistence type="inferred from homology"/>
<dbReference type="EC" id="5.3.1.9" evidence="1"/>
<dbReference type="EMBL" id="AL939128">
    <property type="protein sequence ID" value="CAA19938.1"/>
    <property type="molecule type" value="Genomic_DNA"/>
</dbReference>
<dbReference type="PIR" id="T35158">
    <property type="entry name" value="T35158"/>
</dbReference>
<dbReference type="RefSeq" id="NP_630734.1">
    <property type="nucleotide sequence ID" value="NC_003888.3"/>
</dbReference>
<dbReference type="RefSeq" id="WP_011031083.1">
    <property type="nucleotide sequence ID" value="NZ_VNID01000002.1"/>
</dbReference>
<dbReference type="SMR" id="O88015"/>
<dbReference type="FunCoup" id="O88015">
    <property type="interactions" value="441"/>
</dbReference>
<dbReference type="STRING" id="100226.gene:17764317"/>
<dbReference type="PaxDb" id="100226-SCO6659"/>
<dbReference type="KEGG" id="sco:SCO6659"/>
<dbReference type="PATRIC" id="fig|100226.15.peg.6765"/>
<dbReference type="eggNOG" id="COG0166">
    <property type="taxonomic scope" value="Bacteria"/>
</dbReference>
<dbReference type="HOGENOM" id="CLU_017947_3_1_11"/>
<dbReference type="InParanoid" id="O88015"/>
<dbReference type="OrthoDB" id="140919at2"/>
<dbReference type="PhylomeDB" id="O88015"/>
<dbReference type="UniPathway" id="UPA00109">
    <property type="reaction ID" value="UER00181"/>
</dbReference>
<dbReference type="UniPathway" id="UPA00138"/>
<dbReference type="Proteomes" id="UP000001973">
    <property type="component" value="Chromosome"/>
</dbReference>
<dbReference type="GO" id="GO:0005829">
    <property type="term" value="C:cytosol"/>
    <property type="evidence" value="ECO:0000318"/>
    <property type="project" value="GO_Central"/>
</dbReference>
<dbReference type="GO" id="GO:0097367">
    <property type="term" value="F:carbohydrate derivative binding"/>
    <property type="evidence" value="ECO:0007669"/>
    <property type="project" value="InterPro"/>
</dbReference>
<dbReference type="GO" id="GO:0004347">
    <property type="term" value="F:glucose-6-phosphate isomerase activity"/>
    <property type="evidence" value="ECO:0000318"/>
    <property type="project" value="GO_Central"/>
</dbReference>
<dbReference type="GO" id="GO:0048029">
    <property type="term" value="F:monosaccharide binding"/>
    <property type="evidence" value="ECO:0000318"/>
    <property type="project" value="GO_Central"/>
</dbReference>
<dbReference type="GO" id="GO:0006094">
    <property type="term" value="P:gluconeogenesis"/>
    <property type="evidence" value="ECO:0000318"/>
    <property type="project" value="GO_Central"/>
</dbReference>
<dbReference type="GO" id="GO:0051156">
    <property type="term" value="P:glucose 6-phosphate metabolic process"/>
    <property type="evidence" value="ECO:0000318"/>
    <property type="project" value="GO_Central"/>
</dbReference>
<dbReference type="GO" id="GO:0006096">
    <property type="term" value="P:glycolytic process"/>
    <property type="evidence" value="ECO:0000318"/>
    <property type="project" value="GO_Central"/>
</dbReference>
<dbReference type="CDD" id="cd05015">
    <property type="entry name" value="SIS_PGI_1"/>
    <property type="match status" value="1"/>
</dbReference>
<dbReference type="CDD" id="cd05016">
    <property type="entry name" value="SIS_PGI_2"/>
    <property type="match status" value="1"/>
</dbReference>
<dbReference type="FunFam" id="1.10.1390.10:FF:000001">
    <property type="entry name" value="Glucose-6-phosphate isomerase"/>
    <property type="match status" value="1"/>
</dbReference>
<dbReference type="FunFam" id="3.40.50.10490:FF:000018">
    <property type="entry name" value="Glucose-6-phosphate isomerase"/>
    <property type="match status" value="1"/>
</dbReference>
<dbReference type="Gene3D" id="1.10.1390.10">
    <property type="match status" value="1"/>
</dbReference>
<dbReference type="Gene3D" id="3.40.50.10490">
    <property type="entry name" value="Glucose-6-phosphate isomerase like protein, domain 1"/>
    <property type="match status" value="2"/>
</dbReference>
<dbReference type="HAMAP" id="MF_00473">
    <property type="entry name" value="G6P_isomerase"/>
    <property type="match status" value="1"/>
</dbReference>
<dbReference type="InterPro" id="IPR001672">
    <property type="entry name" value="G6P_Isomerase"/>
</dbReference>
<dbReference type="InterPro" id="IPR023096">
    <property type="entry name" value="G6P_Isomerase_C"/>
</dbReference>
<dbReference type="InterPro" id="IPR018189">
    <property type="entry name" value="Phosphoglucose_isomerase_CS"/>
</dbReference>
<dbReference type="InterPro" id="IPR046348">
    <property type="entry name" value="SIS_dom_sf"/>
</dbReference>
<dbReference type="InterPro" id="IPR035476">
    <property type="entry name" value="SIS_PGI_1"/>
</dbReference>
<dbReference type="InterPro" id="IPR035482">
    <property type="entry name" value="SIS_PGI_2"/>
</dbReference>
<dbReference type="NCBIfam" id="NF001211">
    <property type="entry name" value="PRK00179.1"/>
    <property type="match status" value="1"/>
</dbReference>
<dbReference type="PANTHER" id="PTHR11469">
    <property type="entry name" value="GLUCOSE-6-PHOSPHATE ISOMERASE"/>
    <property type="match status" value="1"/>
</dbReference>
<dbReference type="PANTHER" id="PTHR11469:SF1">
    <property type="entry name" value="GLUCOSE-6-PHOSPHATE ISOMERASE"/>
    <property type="match status" value="1"/>
</dbReference>
<dbReference type="Pfam" id="PF00342">
    <property type="entry name" value="PGI"/>
    <property type="match status" value="1"/>
</dbReference>
<dbReference type="PRINTS" id="PR00662">
    <property type="entry name" value="G6PISOMERASE"/>
</dbReference>
<dbReference type="SUPFAM" id="SSF53697">
    <property type="entry name" value="SIS domain"/>
    <property type="match status" value="1"/>
</dbReference>
<dbReference type="PROSITE" id="PS00765">
    <property type="entry name" value="P_GLUCOSE_ISOMERASE_1"/>
    <property type="match status" value="1"/>
</dbReference>
<dbReference type="PROSITE" id="PS00174">
    <property type="entry name" value="P_GLUCOSE_ISOMERASE_2"/>
    <property type="match status" value="1"/>
</dbReference>
<dbReference type="PROSITE" id="PS51463">
    <property type="entry name" value="P_GLUCOSE_ISOMERASE_3"/>
    <property type="match status" value="1"/>
</dbReference>
<name>G6PI1_STRCO</name>
<reference key="1">
    <citation type="journal article" date="2002" name="Nature">
        <title>Complete genome sequence of the model actinomycete Streptomyces coelicolor A3(2).</title>
        <authorList>
            <person name="Bentley S.D."/>
            <person name="Chater K.F."/>
            <person name="Cerdeno-Tarraga A.-M."/>
            <person name="Challis G.L."/>
            <person name="Thomson N.R."/>
            <person name="James K.D."/>
            <person name="Harris D.E."/>
            <person name="Quail M.A."/>
            <person name="Kieser H."/>
            <person name="Harper D."/>
            <person name="Bateman A."/>
            <person name="Brown S."/>
            <person name="Chandra G."/>
            <person name="Chen C.W."/>
            <person name="Collins M."/>
            <person name="Cronin A."/>
            <person name="Fraser A."/>
            <person name="Goble A."/>
            <person name="Hidalgo J."/>
            <person name="Hornsby T."/>
            <person name="Howarth S."/>
            <person name="Huang C.-H."/>
            <person name="Kieser T."/>
            <person name="Larke L."/>
            <person name="Murphy L.D."/>
            <person name="Oliver K."/>
            <person name="O'Neil S."/>
            <person name="Rabbinowitsch E."/>
            <person name="Rajandream M.A."/>
            <person name="Rutherford K.M."/>
            <person name="Rutter S."/>
            <person name="Seeger K."/>
            <person name="Saunders D."/>
            <person name="Sharp S."/>
            <person name="Squares R."/>
            <person name="Squares S."/>
            <person name="Taylor K."/>
            <person name="Warren T."/>
            <person name="Wietzorrek A."/>
            <person name="Woodward J.R."/>
            <person name="Barrell B.G."/>
            <person name="Parkhill J."/>
            <person name="Hopwood D.A."/>
        </authorList>
    </citation>
    <scope>NUCLEOTIDE SEQUENCE [LARGE SCALE GENOMIC DNA]</scope>
    <source>
        <strain>ATCC BAA-471 / A3(2) / M145</strain>
    </source>
</reference>
<gene>
    <name evidence="1" type="primary">pgi1</name>
    <name type="synonym">pgi</name>
    <name type="ordered locus">SCO6659</name>
    <name type="ORF">SC5A7.09c</name>
</gene>
<feature type="chain" id="PRO_0000180749" description="Glucose-6-phosphate isomerase 1">
    <location>
        <begin position="1"/>
        <end position="550"/>
    </location>
</feature>
<feature type="active site" description="Proton donor" evidence="1">
    <location>
        <position position="358"/>
    </location>
</feature>
<feature type="active site" evidence="1">
    <location>
        <position position="389"/>
    </location>
</feature>
<feature type="active site" evidence="1">
    <location>
        <position position="513"/>
    </location>
</feature>
<keyword id="KW-0963">Cytoplasm</keyword>
<keyword id="KW-0312">Gluconeogenesis</keyword>
<keyword id="KW-0324">Glycolysis</keyword>
<keyword id="KW-0413">Isomerase</keyword>
<keyword id="KW-1185">Reference proteome</keyword>
<accession>O88015</accession>
<sequence length="550" mass="60424">MSDTPKLNQRPEWTALADHAKGTLPHPDLRELFAQDPGRAERYVVRVGDLRIDYSKHLVTDETLALLQELAAATGVSGLRDAMFRGERINITEDRAVLHTALRAPRDAVIEVDGENVVPQVHAVLDKMAGFADRVRSGEWTGHTGRRIRNVVNIGIGGSDLGPAMAYEALRAFTDRSLTLRFVSNVDGADLHEAVRDLDPAETLFIIASKTFTTIETITNATSARSWLLDGLGGDEKAVAKHFVALSTNAEKVADFGIDTANMFEFWDWVGGRYSFDSAIGLSLMIAIGPDRFREMLDGFRIVDEHFRNAEAPANAPLLLGLLGVWYGDFLGAQSHAVLPYSHYLSKFTAYLQQLDMESNGKSVDREGNPVQWQTGPVVWGTPGTNGQHAYYQLIHQGTKLIPADFIGFARPVDELSEELKAQHDLLMANFFAQTQALAFGKTPDEVRAEGVPEELVPHKTFRGNHPTTTVLAAELTPSVLGQLIALYEHKVFVQGAIWNIDSFDQWGVELGKVLAKRVEPALTEGADVPGLDPSTAALVAAYRELKEVH</sequence>
<protein>
    <recommendedName>
        <fullName evidence="1">Glucose-6-phosphate isomerase 1</fullName>
        <shortName evidence="1">GPI 1</shortName>
        <ecNumber evidence="1">5.3.1.9</ecNumber>
    </recommendedName>
    <alternativeName>
        <fullName evidence="1">Phosphoglucose isomerase 1</fullName>
        <shortName evidence="1">PGI 1</shortName>
    </alternativeName>
    <alternativeName>
        <fullName evidence="1">Phosphohexose isomerase 1</fullName>
        <shortName evidence="1">PHI 1</shortName>
    </alternativeName>
</protein>
<evidence type="ECO:0000255" key="1">
    <source>
        <dbReference type="HAMAP-Rule" id="MF_00473"/>
    </source>
</evidence>
<evidence type="ECO:0000305" key="2"/>